<accession>Q6G5C6</accession>
<gene>
    <name evidence="1" type="primary">frr</name>
    <name type="ordered locus">BH06250</name>
</gene>
<reference key="1">
    <citation type="journal article" date="2004" name="Proc. Natl. Acad. Sci. U.S.A.">
        <title>The louse-borne human pathogen Bartonella quintana is a genomic derivative of the zoonotic agent Bartonella henselae.</title>
        <authorList>
            <person name="Alsmark U.C.M."/>
            <person name="Frank A.C."/>
            <person name="Karlberg E.O."/>
            <person name="Legault B.-A."/>
            <person name="Ardell D.H."/>
            <person name="Canbaeck B."/>
            <person name="Eriksson A.-S."/>
            <person name="Naeslund A.K."/>
            <person name="Handley S.A."/>
            <person name="Huvet M."/>
            <person name="La Scola B."/>
            <person name="Holmberg M."/>
            <person name="Andersson S.G.E."/>
        </authorList>
    </citation>
    <scope>NUCLEOTIDE SEQUENCE [LARGE SCALE GENOMIC DNA]</scope>
    <source>
        <strain>ATCC 49882 / DSM 28221 / CCUG 30454 / Houston 1</strain>
    </source>
</reference>
<dbReference type="EMBL" id="BX897699">
    <property type="protein sequence ID" value="CAF27429.1"/>
    <property type="molecule type" value="Genomic_DNA"/>
</dbReference>
<dbReference type="RefSeq" id="WP_011180549.1">
    <property type="nucleotide sequence ID" value="NC_005956.1"/>
</dbReference>
<dbReference type="SMR" id="Q6G5C6"/>
<dbReference type="PaxDb" id="283166-BH06250"/>
<dbReference type="EnsemblBacteria" id="CAF27429">
    <property type="protein sequence ID" value="CAF27429"/>
    <property type="gene ID" value="BH06250"/>
</dbReference>
<dbReference type="GeneID" id="92985649"/>
<dbReference type="KEGG" id="bhe:BH06250"/>
<dbReference type="eggNOG" id="COG0233">
    <property type="taxonomic scope" value="Bacteria"/>
</dbReference>
<dbReference type="OrthoDB" id="9804006at2"/>
<dbReference type="Proteomes" id="UP000000421">
    <property type="component" value="Chromosome"/>
</dbReference>
<dbReference type="GO" id="GO:0005829">
    <property type="term" value="C:cytosol"/>
    <property type="evidence" value="ECO:0007669"/>
    <property type="project" value="GOC"/>
</dbReference>
<dbReference type="GO" id="GO:0043023">
    <property type="term" value="F:ribosomal large subunit binding"/>
    <property type="evidence" value="ECO:0007669"/>
    <property type="project" value="TreeGrafter"/>
</dbReference>
<dbReference type="GO" id="GO:0002184">
    <property type="term" value="P:cytoplasmic translational termination"/>
    <property type="evidence" value="ECO:0007669"/>
    <property type="project" value="TreeGrafter"/>
</dbReference>
<dbReference type="CDD" id="cd00520">
    <property type="entry name" value="RRF"/>
    <property type="match status" value="1"/>
</dbReference>
<dbReference type="FunFam" id="1.10.132.20:FF:000001">
    <property type="entry name" value="Ribosome-recycling factor"/>
    <property type="match status" value="1"/>
</dbReference>
<dbReference type="FunFam" id="3.30.1360.40:FF:000001">
    <property type="entry name" value="Ribosome-recycling factor"/>
    <property type="match status" value="1"/>
</dbReference>
<dbReference type="Gene3D" id="3.30.1360.40">
    <property type="match status" value="1"/>
</dbReference>
<dbReference type="Gene3D" id="1.10.132.20">
    <property type="entry name" value="Ribosome-recycling factor"/>
    <property type="match status" value="1"/>
</dbReference>
<dbReference type="HAMAP" id="MF_00040">
    <property type="entry name" value="RRF"/>
    <property type="match status" value="1"/>
</dbReference>
<dbReference type="InterPro" id="IPR002661">
    <property type="entry name" value="Ribosome_recyc_fac"/>
</dbReference>
<dbReference type="InterPro" id="IPR023584">
    <property type="entry name" value="Ribosome_recyc_fac_dom"/>
</dbReference>
<dbReference type="InterPro" id="IPR036191">
    <property type="entry name" value="RRF_sf"/>
</dbReference>
<dbReference type="NCBIfam" id="TIGR00496">
    <property type="entry name" value="frr"/>
    <property type="match status" value="1"/>
</dbReference>
<dbReference type="PANTHER" id="PTHR20982:SF3">
    <property type="entry name" value="MITOCHONDRIAL RIBOSOME RECYCLING FACTOR PSEUDO 1"/>
    <property type="match status" value="1"/>
</dbReference>
<dbReference type="PANTHER" id="PTHR20982">
    <property type="entry name" value="RIBOSOME RECYCLING FACTOR"/>
    <property type="match status" value="1"/>
</dbReference>
<dbReference type="Pfam" id="PF01765">
    <property type="entry name" value="RRF"/>
    <property type="match status" value="1"/>
</dbReference>
<dbReference type="SUPFAM" id="SSF55194">
    <property type="entry name" value="Ribosome recycling factor, RRF"/>
    <property type="match status" value="1"/>
</dbReference>
<sequence length="186" mass="20666">MSVTSIMDDLKRRMHGAISAFKHELGGLRTGRASASLLEPLTVEAYGSVVHINQVANISVPEPRMLSVSVWDKTMVGAVERAIRDSGLGLNPITDGMNLRIPLPELNEERRKELVKIAHQYAEQARVATRHVRRDGMDNLKKLEKEGEIGQDEAHGLSEKVQKLTDETIADIDKILAVKESEIMHV</sequence>
<proteinExistence type="inferred from homology"/>
<organism>
    <name type="scientific">Bartonella henselae (strain ATCC 49882 / DSM 28221 / CCUG 30454 / Houston 1)</name>
    <name type="common">Rochalimaea henselae</name>
    <dbReference type="NCBI Taxonomy" id="283166"/>
    <lineage>
        <taxon>Bacteria</taxon>
        <taxon>Pseudomonadati</taxon>
        <taxon>Pseudomonadota</taxon>
        <taxon>Alphaproteobacteria</taxon>
        <taxon>Hyphomicrobiales</taxon>
        <taxon>Bartonellaceae</taxon>
        <taxon>Bartonella</taxon>
    </lineage>
</organism>
<keyword id="KW-0963">Cytoplasm</keyword>
<keyword id="KW-0648">Protein biosynthesis</keyword>
<protein>
    <recommendedName>
        <fullName evidence="1">Ribosome-recycling factor</fullName>
        <shortName evidence="1">RRF</shortName>
    </recommendedName>
    <alternativeName>
        <fullName evidence="1">Ribosome-releasing factor</fullName>
    </alternativeName>
</protein>
<evidence type="ECO:0000255" key="1">
    <source>
        <dbReference type="HAMAP-Rule" id="MF_00040"/>
    </source>
</evidence>
<name>RRF_BARHE</name>
<comment type="function">
    <text evidence="1">Responsible for the release of ribosomes from messenger RNA at the termination of protein biosynthesis. May increase the efficiency of translation by recycling ribosomes from one round of translation to another.</text>
</comment>
<comment type="subcellular location">
    <subcellularLocation>
        <location evidence="1">Cytoplasm</location>
    </subcellularLocation>
</comment>
<comment type="similarity">
    <text evidence="1">Belongs to the RRF family.</text>
</comment>
<feature type="chain" id="PRO_0000167415" description="Ribosome-recycling factor">
    <location>
        <begin position="1"/>
        <end position="186"/>
    </location>
</feature>